<protein>
    <recommendedName>
        <fullName>Probable lipid hydrolase 463L</fullName>
        <ecNumber>3.1.1.-</ecNumber>
    </recommendedName>
</protein>
<dbReference type="EC" id="3.1.1.-"/>
<dbReference type="EMBL" id="AF303741">
    <property type="protein sequence ID" value="AAK82323.1"/>
    <property type="molecule type" value="Genomic_DNA"/>
</dbReference>
<dbReference type="RefSeq" id="NP_149926.1">
    <property type="nucleotide sequence ID" value="NC_003038.1"/>
</dbReference>
<dbReference type="SMR" id="Q91F63"/>
<dbReference type="KEGG" id="vg:1733292"/>
<dbReference type="OrthoDB" id="10048at10239"/>
<dbReference type="Proteomes" id="UP000001359">
    <property type="component" value="Genome"/>
</dbReference>
<dbReference type="GO" id="GO:0016020">
    <property type="term" value="C:membrane"/>
    <property type="evidence" value="ECO:0007669"/>
    <property type="project" value="UniProtKB-SubCell"/>
</dbReference>
<dbReference type="GO" id="GO:0016787">
    <property type="term" value="F:hydrolase activity"/>
    <property type="evidence" value="ECO:0007669"/>
    <property type="project" value="UniProtKB-KW"/>
</dbReference>
<dbReference type="GO" id="GO:0016042">
    <property type="term" value="P:lipid catabolic process"/>
    <property type="evidence" value="ECO:0007669"/>
    <property type="project" value="UniProtKB-KW"/>
</dbReference>
<dbReference type="Gene3D" id="3.40.1090.10">
    <property type="entry name" value="Cytosolic phospholipase A2 catalytic domain"/>
    <property type="match status" value="2"/>
</dbReference>
<dbReference type="InterPro" id="IPR016035">
    <property type="entry name" value="Acyl_Trfase/lysoPLipase"/>
</dbReference>
<dbReference type="InterPro" id="IPR052580">
    <property type="entry name" value="Lipid_Hydrolase"/>
</dbReference>
<dbReference type="InterPro" id="IPR002641">
    <property type="entry name" value="PNPLA_dom"/>
</dbReference>
<dbReference type="PANTHER" id="PTHR46394">
    <property type="entry name" value="ANNEXIN"/>
    <property type="match status" value="1"/>
</dbReference>
<dbReference type="PANTHER" id="PTHR46394:SF1">
    <property type="entry name" value="PNPLA DOMAIN-CONTAINING PROTEIN"/>
    <property type="match status" value="1"/>
</dbReference>
<dbReference type="Pfam" id="PF01734">
    <property type="entry name" value="Patatin"/>
    <property type="match status" value="1"/>
</dbReference>
<dbReference type="SUPFAM" id="SSF52151">
    <property type="entry name" value="FabD/lysophospholipase-like"/>
    <property type="match status" value="1"/>
</dbReference>
<dbReference type="PROSITE" id="PS51635">
    <property type="entry name" value="PNPLA"/>
    <property type="match status" value="1"/>
</dbReference>
<organism>
    <name type="scientific">Invertebrate iridescent virus 6</name>
    <name type="common">IIV-6</name>
    <name type="synonym">Chilo iridescent virus</name>
    <dbReference type="NCBI Taxonomy" id="176652"/>
    <lineage>
        <taxon>Viruses</taxon>
        <taxon>Varidnaviria</taxon>
        <taxon>Bamfordvirae</taxon>
        <taxon>Nucleocytoviricota</taxon>
        <taxon>Megaviricetes</taxon>
        <taxon>Pimascovirales</taxon>
        <taxon>Iridoviridae</taxon>
        <taxon>Betairidovirinae</taxon>
        <taxon>Iridovirus</taxon>
    </lineage>
</organism>
<proteinExistence type="inferred from homology"/>
<name>463L_IIV6</name>
<reference key="1">
    <citation type="journal article" date="2001" name="Virology">
        <title>Analysis of the first complete DNA sequence of an invertebrate iridovirus: coding strategy of the genome of Chilo iridescent virus.</title>
        <authorList>
            <person name="Jakob N.J."/>
            <person name="Mueller K."/>
            <person name="Bahr U."/>
            <person name="Darai G."/>
        </authorList>
    </citation>
    <scope>NUCLEOTIDE SEQUENCE [LARGE SCALE GENOMIC DNA]</scope>
</reference>
<reference key="2">
    <citation type="journal article" date="2007" name="Virol. J.">
        <title>Comparative genomic analysis of the family Iridoviridae: re-annotating and defining the core set of iridovirus genes.</title>
        <authorList>
            <person name="Eaton H.E."/>
            <person name="Metcalf J."/>
            <person name="Penny E."/>
            <person name="Tcherepanov V."/>
            <person name="Upton C."/>
            <person name="Brunetti C.R."/>
        </authorList>
    </citation>
    <scope>GENOME REANNOTATION</scope>
</reference>
<sequence length="290" mass="33407">MNHFVYLMDKYGNPYSFSLKPKYYKTLVLSGGAMRGVYLLGALNGLKIKINKISTFIGISSGSIICFLLSIGYTPYEIFISLLKYDNLLTINLDKLYSGDTRNEGGLFSSENIFKHLETQMRLKEISRSITFKEHFEKTGKILIVMAFNITKCKEDIFTYETTPDMEILNSLKLSARIPIIFGPIKYNNNFYIDGGVWNNFPIDIAIKYHNKKNKKKSDWIIAVTTLFSTYKQNIHQWYKFSNINIVMVNDTPDLNPSLVSSDLEKLTMFNKGEEKASLIKKQNIRRNSI</sequence>
<keyword id="KW-0378">Hydrolase</keyword>
<keyword id="KW-0442">Lipid degradation</keyword>
<keyword id="KW-0443">Lipid metabolism</keyword>
<keyword id="KW-0472">Membrane</keyword>
<keyword id="KW-1185">Reference proteome</keyword>
<keyword id="KW-0812">Transmembrane</keyword>
<keyword id="KW-1133">Transmembrane helix</keyword>
<feature type="chain" id="PRO_0000377511" description="Probable lipid hydrolase 463L">
    <location>
        <begin position="1"/>
        <end position="290"/>
    </location>
</feature>
<feature type="transmembrane region" description="Helical" evidence="2">
    <location>
        <begin position="26"/>
        <end position="46"/>
    </location>
</feature>
<feature type="transmembrane region" description="Helical" evidence="2">
    <location>
        <begin position="53"/>
        <end position="73"/>
    </location>
</feature>
<feature type="domain" description="PNPLA" evidence="3">
    <location>
        <begin position="27"/>
        <end position="207"/>
    </location>
</feature>
<feature type="short sequence motif" description="GXSXG" evidence="3">
    <location>
        <begin position="58"/>
        <end position="62"/>
    </location>
</feature>
<feature type="short sequence motif" description="DGA/G" evidence="3">
    <location>
        <begin position="194"/>
        <end position="196"/>
    </location>
</feature>
<feature type="active site" description="Nucleophile" evidence="3">
    <location>
        <position position="60"/>
    </location>
</feature>
<feature type="active site" description="Proton acceptor" evidence="3">
    <location>
        <position position="194"/>
    </location>
</feature>
<evidence type="ECO:0000250" key="1"/>
<evidence type="ECO:0000255" key="2"/>
<evidence type="ECO:0000255" key="3">
    <source>
        <dbReference type="PROSITE-ProRule" id="PRU01161"/>
    </source>
</evidence>
<evidence type="ECO:0000305" key="4"/>
<organismHost>
    <name type="scientific">Acheta domesticus</name>
    <name type="common">House cricket</name>
    <dbReference type="NCBI Taxonomy" id="6997"/>
</organismHost>
<organismHost>
    <name type="scientific">Chilo suppressalis</name>
    <name type="common">Asiatic rice borer moth</name>
    <dbReference type="NCBI Taxonomy" id="168631"/>
</organismHost>
<organismHost>
    <name type="scientific">Gryllus bimaculatus</name>
    <name type="common">Two-spotted cricket</name>
    <dbReference type="NCBI Taxonomy" id="6999"/>
</organismHost>
<organismHost>
    <name type="scientific">Gryllus campestris</name>
    <dbReference type="NCBI Taxonomy" id="58607"/>
</organismHost>
<organismHost>
    <name type="scientific">Spodoptera frugiperda</name>
    <name type="common">Fall armyworm</name>
    <dbReference type="NCBI Taxonomy" id="7108"/>
</organismHost>
<gene>
    <name type="ORF">IIV6-463L</name>
</gene>
<comment type="function">
    <text evidence="1">Probable lipid hydrolase.</text>
</comment>
<comment type="subcellular location">
    <subcellularLocation>
        <location evidence="4">Membrane</location>
        <topology evidence="4">Multi-pass membrane protein</topology>
    </subcellularLocation>
</comment>
<accession>Q91F63</accession>